<proteinExistence type="inferred from homology"/>
<feature type="chain" id="PRO_0000134767" description="6,7-dimethyl-8-ribityllumazine synthase">
    <location>
        <begin position="1"/>
        <end position="158"/>
    </location>
</feature>
<feature type="active site" description="Proton donor" evidence="1">
    <location>
        <position position="89"/>
    </location>
</feature>
<feature type="binding site" evidence="1">
    <location>
        <position position="27"/>
    </location>
    <ligand>
        <name>5-amino-6-(D-ribitylamino)uracil</name>
        <dbReference type="ChEBI" id="CHEBI:15934"/>
    </ligand>
</feature>
<feature type="binding site" evidence="1">
    <location>
        <begin position="58"/>
        <end position="60"/>
    </location>
    <ligand>
        <name>5-amino-6-(D-ribitylamino)uracil</name>
        <dbReference type="ChEBI" id="CHEBI:15934"/>
    </ligand>
</feature>
<feature type="binding site" evidence="1">
    <location>
        <begin position="81"/>
        <end position="83"/>
    </location>
    <ligand>
        <name>5-amino-6-(D-ribitylamino)uracil</name>
        <dbReference type="ChEBI" id="CHEBI:15934"/>
    </ligand>
</feature>
<feature type="binding site" evidence="1">
    <location>
        <begin position="86"/>
        <end position="87"/>
    </location>
    <ligand>
        <name>(2S)-2-hydroxy-3-oxobutyl phosphate</name>
        <dbReference type="ChEBI" id="CHEBI:58830"/>
    </ligand>
</feature>
<feature type="binding site" evidence="1">
    <location>
        <position position="114"/>
    </location>
    <ligand>
        <name>5-amino-6-(D-ribitylamino)uracil</name>
        <dbReference type="ChEBI" id="CHEBI:15934"/>
    </ligand>
</feature>
<feature type="binding site" evidence="1">
    <location>
        <position position="128"/>
    </location>
    <ligand>
        <name>(2S)-2-hydroxy-3-oxobutyl phosphate</name>
        <dbReference type="ChEBI" id="CHEBI:58830"/>
    </ligand>
</feature>
<sequence length="158" mass="15591">MSGAGAPGAAERIDGTGLRVVIVAGAWHEEIANGLIAGAERTLEAAGASWSIARVPGSFELPVASKAALEAGADAVVALGVIIRGGTPHFEYVSAAATDGLTRVALNTGKPVGFGVLTLDDEAQGLDRAGLPGSTEDKGAEAAHAALATAVALRALRG</sequence>
<gene>
    <name evidence="1" type="primary">ribH</name>
    <name type="ordered locus">Lxx04340</name>
</gene>
<comment type="function">
    <text evidence="1">Catalyzes the formation of 6,7-dimethyl-8-ribityllumazine by condensation of 5-amino-6-(D-ribitylamino)uracil with 3,4-dihydroxy-2-butanone 4-phosphate. This is the penultimate step in the biosynthesis of riboflavin.</text>
</comment>
<comment type="catalytic activity">
    <reaction evidence="1">
        <text>(2S)-2-hydroxy-3-oxobutyl phosphate + 5-amino-6-(D-ribitylamino)uracil = 6,7-dimethyl-8-(1-D-ribityl)lumazine + phosphate + 2 H2O + H(+)</text>
        <dbReference type="Rhea" id="RHEA:26152"/>
        <dbReference type="ChEBI" id="CHEBI:15377"/>
        <dbReference type="ChEBI" id="CHEBI:15378"/>
        <dbReference type="ChEBI" id="CHEBI:15934"/>
        <dbReference type="ChEBI" id="CHEBI:43474"/>
        <dbReference type="ChEBI" id="CHEBI:58201"/>
        <dbReference type="ChEBI" id="CHEBI:58830"/>
        <dbReference type="EC" id="2.5.1.78"/>
    </reaction>
</comment>
<comment type="pathway">
    <text evidence="1">Cofactor biosynthesis; riboflavin biosynthesis; riboflavin from 2-hydroxy-3-oxobutyl phosphate and 5-amino-6-(D-ribitylamino)uracil: step 1/2.</text>
</comment>
<comment type="similarity">
    <text evidence="1">Belongs to the DMRL synthase family.</text>
</comment>
<keyword id="KW-1185">Reference proteome</keyword>
<keyword id="KW-0686">Riboflavin biosynthesis</keyword>
<keyword id="KW-0808">Transferase</keyword>
<dbReference type="EC" id="2.5.1.78" evidence="1"/>
<dbReference type="EMBL" id="AE016822">
    <property type="protein sequence ID" value="AAT88428.1"/>
    <property type="molecule type" value="Genomic_DNA"/>
</dbReference>
<dbReference type="RefSeq" id="WP_011185429.1">
    <property type="nucleotide sequence ID" value="NC_006087.1"/>
</dbReference>
<dbReference type="SMR" id="Q6AGR7"/>
<dbReference type="STRING" id="281090.Lxx04340"/>
<dbReference type="KEGG" id="lxx:Lxx04340"/>
<dbReference type="eggNOG" id="COG0054">
    <property type="taxonomic scope" value="Bacteria"/>
</dbReference>
<dbReference type="HOGENOM" id="CLU_089358_1_2_11"/>
<dbReference type="UniPathway" id="UPA00275">
    <property type="reaction ID" value="UER00404"/>
</dbReference>
<dbReference type="Proteomes" id="UP000001306">
    <property type="component" value="Chromosome"/>
</dbReference>
<dbReference type="GO" id="GO:0005829">
    <property type="term" value="C:cytosol"/>
    <property type="evidence" value="ECO:0007669"/>
    <property type="project" value="TreeGrafter"/>
</dbReference>
<dbReference type="GO" id="GO:0009349">
    <property type="term" value="C:riboflavin synthase complex"/>
    <property type="evidence" value="ECO:0007669"/>
    <property type="project" value="InterPro"/>
</dbReference>
<dbReference type="GO" id="GO:0000906">
    <property type="term" value="F:6,7-dimethyl-8-ribityllumazine synthase activity"/>
    <property type="evidence" value="ECO:0007669"/>
    <property type="project" value="UniProtKB-UniRule"/>
</dbReference>
<dbReference type="GO" id="GO:0009231">
    <property type="term" value="P:riboflavin biosynthetic process"/>
    <property type="evidence" value="ECO:0007669"/>
    <property type="project" value="UniProtKB-UniRule"/>
</dbReference>
<dbReference type="CDD" id="cd09209">
    <property type="entry name" value="Lumazine_synthase-I"/>
    <property type="match status" value="1"/>
</dbReference>
<dbReference type="Gene3D" id="3.40.50.960">
    <property type="entry name" value="Lumazine/riboflavin synthase"/>
    <property type="match status" value="1"/>
</dbReference>
<dbReference type="HAMAP" id="MF_00178">
    <property type="entry name" value="Lumazine_synth"/>
    <property type="match status" value="1"/>
</dbReference>
<dbReference type="InterPro" id="IPR034964">
    <property type="entry name" value="LS"/>
</dbReference>
<dbReference type="InterPro" id="IPR002180">
    <property type="entry name" value="LS/RS"/>
</dbReference>
<dbReference type="InterPro" id="IPR036467">
    <property type="entry name" value="LS/RS_sf"/>
</dbReference>
<dbReference type="NCBIfam" id="TIGR00114">
    <property type="entry name" value="lumazine-synth"/>
    <property type="match status" value="1"/>
</dbReference>
<dbReference type="PANTHER" id="PTHR21058:SF0">
    <property type="entry name" value="6,7-DIMETHYL-8-RIBITYLLUMAZINE SYNTHASE"/>
    <property type="match status" value="1"/>
</dbReference>
<dbReference type="PANTHER" id="PTHR21058">
    <property type="entry name" value="6,7-DIMETHYL-8-RIBITYLLUMAZINE SYNTHASE DMRL SYNTHASE LUMAZINE SYNTHASE"/>
    <property type="match status" value="1"/>
</dbReference>
<dbReference type="Pfam" id="PF00885">
    <property type="entry name" value="DMRL_synthase"/>
    <property type="match status" value="1"/>
</dbReference>
<dbReference type="SUPFAM" id="SSF52121">
    <property type="entry name" value="Lumazine synthase"/>
    <property type="match status" value="1"/>
</dbReference>
<accession>Q6AGR7</accession>
<evidence type="ECO:0000255" key="1">
    <source>
        <dbReference type="HAMAP-Rule" id="MF_00178"/>
    </source>
</evidence>
<name>RISB_LEIXX</name>
<organism>
    <name type="scientific">Leifsonia xyli subsp. xyli (strain CTCB07)</name>
    <dbReference type="NCBI Taxonomy" id="281090"/>
    <lineage>
        <taxon>Bacteria</taxon>
        <taxon>Bacillati</taxon>
        <taxon>Actinomycetota</taxon>
        <taxon>Actinomycetes</taxon>
        <taxon>Micrococcales</taxon>
        <taxon>Microbacteriaceae</taxon>
        <taxon>Leifsonia</taxon>
    </lineage>
</organism>
<protein>
    <recommendedName>
        <fullName evidence="1">6,7-dimethyl-8-ribityllumazine synthase</fullName>
        <shortName evidence="1">DMRL synthase</shortName>
        <shortName evidence="1">LS</shortName>
        <shortName evidence="1">Lumazine synthase</shortName>
        <ecNumber evidence="1">2.5.1.78</ecNumber>
    </recommendedName>
</protein>
<reference key="1">
    <citation type="journal article" date="2004" name="Mol. Plant Microbe Interact.">
        <title>The genome sequence of the Gram-positive sugarcane pathogen Leifsonia xyli subsp. xyli.</title>
        <authorList>
            <person name="Monteiro-Vitorello C.B."/>
            <person name="Camargo L.E.A."/>
            <person name="Van Sluys M.A."/>
            <person name="Kitajima J.P."/>
            <person name="Truffi D."/>
            <person name="do Amaral A.M."/>
            <person name="Harakava R."/>
            <person name="de Oliveira J.C.F."/>
            <person name="Wood D."/>
            <person name="de Oliveira M.C."/>
            <person name="Miyaki C.Y."/>
            <person name="Takita M.A."/>
            <person name="da Silva A.C.R."/>
            <person name="Furlan L.R."/>
            <person name="Carraro D.M."/>
            <person name="Camarotte G."/>
            <person name="Almeida N.F. Jr."/>
            <person name="Carrer H."/>
            <person name="Coutinho L.L."/>
            <person name="El-Dorry H.A."/>
            <person name="Ferro M.I.T."/>
            <person name="Gagliardi P.R."/>
            <person name="Giglioti E."/>
            <person name="Goldman M.H.S."/>
            <person name="Goldman G.H."/>
            <person name="Kimura E.T."/>
            <person name="Ferro E.S."/>
            <person name="Kuramae E.E."/>
            <person name="Lemos E.G.M."/>
            <person name="Lemos M.V.F."/>
            <person name="Mauro S.M.Z."/>
            <person name="Machado M.A."/>
            <person name="Marino C.L."/>
            <person name="Menck C.F."/>
            <person name="Nunes L.R."/>
            <person name="Oliveira R.C."/>
            <person name="Pereira G.G."/>
            <person name="Siqueira W."/>
            <person name="de Souza A.A."/>
            <person name="Tsai S.M."/>
            <person name="Zanca A.S."/>
            <person name="Simpson A.J.G."/>
            <person name="Brumbley S.M."/>
            <person name="Setubal J.C."/>
        </authorList>
    </citation>
    <scope>NUCLEOTIDE SEQUENCE [LARGE SCALE GENOMIC DNA]</scope>
    <source>
        <strain>CTCB07</strain>
    </source>
</reference>